<organism>
    <name type="scientific">Celatoblatta sp. (strain Blue Mountains)</name>
    <name type="common">Cockroach</name>
    <dbReference type="NCBI Taxonomy" id="303880"/>
    <lineage>
        <taxon>Eukaryota</taxon>
        <taxon>Metazoa</taxon>
        <taxon>Ecdysozoa</taxon>
        <taxon>Arthropoda</taxon>
        <taxon>Hexapoda</taxon>
        <taxon>Insecta</taxon>
        <taxon>Pterygota</taxon>
        <taxon>Neoptera</taxon>
        <taxon>Polyneoptera</taxon>
        <taxon>Dictyoptera</taxon>
        <taxon>Blattodea</taxon>
        <taxon>Blattoidea</taxon>
        <taxon>Blattidae</taxon>
        <taxon>Blattinae</taxon>
        <taxon>Celatoblatta</taxon>
    </lineage>
</organism>
<protein>
    <recommendedName>
        <fullName>Pyrokinin-6</fullName>
    </recommendedName>
    <alternativeName>
        <fullName>FXPRL-amide</fullName>
    </alternativeName>
</protein>
<evidence type="ECO:0000250" key="1">
    <source>
        <dbReference type="UniProtKB" id="P82693"/>
    </source>
</evidence>
<evidence type="ECO:0000255" key="2"/>
<evidence type="ECO:0000269" key="3">
    <source>
    </source>
</evidence>
<evidence type="ECO:0000269" key="4">
    <source ref="2"/>
</evidence>
<evidence type="ECO:0000305" key="5"/>
<accession>P84362</accession>
<proteinExistence type="evidence at protein level"/>
<name>PPK6_CELBM</name>
<reference evidence="5" key="1">
    <citation type="journal article" date="2005" name="Peptides">
        <title>Peptidomics of neurohemal organs from species of the cockroach family Blattidae: how do neuropeptides of closely related species differ?</title>
        <authorList>
            <person name="Predel R."/>
            <person name="Gaede G."/>
        </authorList>
    </citation>
    <scope>PROTEIN SEQUENCE</scope>
    <scope>MASS SPECTROMETRY</scope>
    <scope>AMIDATION AT LEU-14</scope>
    <source>
        <tissue evidence="3">Corpora allata</tissue>
    </source>
</reference>
<reference evidence="5" key="2">
    <citation type="submission" date="2004-11" db="UniProtKB">
        <authorList>
            <person name="Predel R."/>
            <person name="Gaede G."/>
        </authorList>
    </citation>
    <scope>SUBCELLULAR LOCATION</scope>
    <scope>TISSUE SPECIFICITY</scope>
</reference>
<sequence length="14" mass="1588">SDPEVPGMWFGPRL</sequence>
<keyword id="KW-0027">Amidation</keyword>
<keyword id="KW-0903">Direct protein sequencing</keyword>
<keyword id="KW-0527">Neuropeptide</keyword>
<keyword id="KW-0964">Secreted</keyword>
<dbReference type="GO" id="GO:0005576">
    <property type="term" value="C:extracellular region"/>
    <property type="evidence" value="ECO:0007669"/>
    <property type="project" value="UniProtKB-SubCell"/>
</dbReference>
<dbReference type="GO" id="GO:0005184">
    <property type="term" value="F:neuropeptide hormone activity"/>
    <property type="evidence" value="ECO:0007669"/>
    <property type="project" value="InterPro"/>
</dbReference>
<dbReference type="GO" id="GO:0007218">
    <property type="term" value="P:neuropeptide signaling pathway"/>
    <property type="evidence" value="ECO:0007669"/>
    <property type="project" value="UniProtKB-KW"/>
</dbReference>
<dbReference type="InterPro" id="IPR001484">
    <property type="entry name" value="Pyrokinin_CS"/>
</dbReference>
<dbReference type="PROSITE" id="PS00539">
    <property type="entry name" value="PYROKININ"/>
    <property type="match status" value="1"/>
</dbReference>
<feature type="peptide" id="PRO_0000044353" description="Pyrokinin-6">
    <location>
        <begin position="1"/>
        <end position="14"/>
    </location>
</feature>
<feature type="modified residue" description="Leucine amide" evidence="3">
    <location>
        <position position="14"/>
    </location>
</feature>
<comment type="function">
    <text evidence="1">Myoactive.</text>
</comment>
<comment type="subcellular location">
    <subcellularLocation>
        <location evidence="4">Secreted</location>
    </subcellularLocation>
</comment>
<comment type="tissue specificity">
    <text evidence="4">Expressed in the brain, subesophageal ganglion and in the retrocerebral complex (mainly corpora cardiaca).</text>
</comment>
<comment type="mass spectrometry" mass="1586.8" method="MALDI" evidence="3"/>
<comment type="similarity">
    <text evidence="2">Belongs to the pyrokinin family.</text>
</comment>